<name>RR19_MESVI</name>
<dbReference type="EMBL" id="AF166114">
    <property type="protein sequence ID" value="AAF43811.1"/>
    <property type="molecule type" value="Genomic_DNA"/>
</dbReference>
<dbReference type="RefSeq" id="NP_038370.1">
    <property type="nucleotide sequence ID" value="NC_002186.1"/>
</dbReference>
<dbReference type="SMR" id="Q9MUU0"/>
<dbReference type="GeneID" id="800957"/>
<dbReference type="GO" id="GO:0009507">
    <property type="term" value="C:chloroplast"/>
    <property type="evidence" value="ECO:0007669"/>
    <property type="project" value="UniProtKB-SubCell"/>
</dbReference>
<dbReference type="GO" id="GO:0005763">
    <property type="term" value="C:mitochondrial small ribosomal subunit"/>
    <property type="evidence" value="ECO:0007669"/>
    <property type="project" value="TreeGrafter"/>
</dbReference>
<dbReference type="GO" id="GO:0019843">
    <property type="term" value="F:rRNA binding"/>
    <property type="evidence" value="ECO:0007669"/>
    <property type="project" value="UniProtKB-UniRule"/>
</dbReference>
<dbReference type="GO" id="GO:0003735">
    <property type="term" value="F:structural constituent of ribosome"/>
    <property type="evidence" value="ECO:0007669"/>
    <property type="project" value="InterPro"/>
</dbReference>
<dbReference type="GO" id="GO:0000028">
    <property type="term" value="P:ribosomal small subunit assembly"/>
    <property type="evidence" value="ECO:0007669"/>
    <property type="project" value="TreeGrafter"/>
</dbReference>
<dbReference type="GO" id="GO:0006412">
    <property type="term" value="P:translation"/>
    <property type="evidence" value="ECO:0007669"/>
    <property type="project" value="UniProtKB-UniRule"/>
</dbReference>
<dbReference type="FunFam" id="3.30.860.10:FF:000001">
    <property type="entry name" value="30S ribosomal protein S19"/>
    <property type="match status" value="1"/>
</dbReference>
<dbReference type="Gene3D" id="3.30.860.10">
    <property type="entry name" value="30s Ribosomal Protein S19, Chain A"/>
    <property type="match status" value="1"/>
</dbReference>
<dbReference type="HAMAP" id="MF_00531">
    <property type="entry name" value="Ribosomal_uS19"/>
    <property type="match status" value="1"/>
</dbReference>
<dbReference type="InterPro" id="IPR002222">
    <property type="entry name" value="Ribosomal_uS19"/>
</dbReference>
<dbReference type="InterPro" id="IPR005732">
    <property type="entry name" value="Ribosomal_uS19_bac-type"/>
</dbReference>
<dbReference type="InterPro" id="IPR020934">
    <property type="entry name" value="Ribosomal_uS19_CS"/>
</dbReference>
<dbReference type="InterPro" id="IPR023575">
    <property type="entry name" value="Ribosomal_uS19_SF"/>
</dbReference>
<dbReference type="NCBIfam" id="TIGR01050">
    <property type="entry name" value="rpsS_bact"/>
    <property type="match status" value="1"/>
</dbReference>
<dbReference type="PANTHER" id="PTHR11880">
    <property type="entry name" value="RIBOSOMAL PROTEIN S19P FAMILY MEMBER"/>
    <property type="match status" value="1"/>
</dbReference>
<dbReference type="PANTHER" id="PTHR11880:SF8">
    <property type="entry name" value="SMALL RIBOSOMAL SUBUNIT PROTEIN US19M"/>
    <property type="match status" value="1"/>
</dbReference>
<dbReference type="Pfam" id="PF00203">
    <property type="entry name" value="Ribosomal_S19"/>
    <property type="match status" value="1"/>
</dbReference>
<dbReference type="PIRSF" id="PIRSF002144">
    <property type="entry name" value="Ribosomal_S19"/>
    <property type="match status" value="1"/>
</dbReference>
<dbReference type="PRINTS" id="PR00975">
    <property type="entry name" value="RIBOSOMALS19"/>
</dbReference>
<dbReference type="SUPFAM" id="SSF54570">
    <property type="entry name" value="Ribosomal protein S19"/>
    <property type="match status" value="1"/>
</dbReference>
<dbReference type="PROSITE" id="PS00323">
    <property type="entry name" value="RIBOSOMAL_S19"/>
    <property type="match status" value="1"/>
</dbReference>
<keyword id="KW-0150">Chloroplast</keyword>
<keyword id="KW-0934">Plastid</keyword>
<keyword id="KW-0687">Ribonucleoprotein</keyword>
<keyword id="KW-0689">Ribosomal protein</keyword>
<keyword id="KW-0694">RNA-binding</keyword>
<keyword id="KW-0699">rRNA-binding</keyword>
<comment type="function">
    <text evidence="1">Protein S19 forms a complex with S13 that binds strongly to the 16S ribosomal RNA.</text>
</comment>
<comment type="subcellular location">
    <subcellularLocation>
        <location>Plastid</location>
        <location>Chloroplast</location>
    </subcellularLocation>
</comment>
<comment type="similarity">
    <text evidence="3">Belongs to the universal ribosomal protein uS19 family.</text>
</comment>
<gene>
    <name type="primary">rps19</name>
</gene>
<geneLocation type="chloroplast"/>
<protein>
    <recommendedName>
        <fullName evidence="3">Small ribosomal subunit protein uS19c</fullName>
    </recommendedName>
    <alternativeName>
        <fullName>30S ribosomal protein S19, chloroplastic</fullName>
    </alternativeName>
</protein>
<proteinExistence type="inferred from homology"/>
<feature type="chain" id="PRO_0000129970" description="Small ribosomal subunit protein uS19c">
    <location>
        <begin position="1"/>
        <end position="93"/>
    </location>
</feature>
<feature type="region of interest" description="Disordered" evidence="2">
    <location>
        <begin position="73"/>
        <end position="93"/>
    </location>
</feature>
<feature type="compositionally biased region" description="Basic residues" evidence="2">
    <location>
        <begin position="80"/>
        <end position="93"/>
    </location>
</feature>
<evidence type="ECO:0000250" key="1"/>
<evidence type="ECO:0000256" key="2">
    <source>
        <dbReference type="SAM" id="MobiDB-lite"/>
    </source>
</evidence>
<evidence type="ECO:0000305" key="3"/>
<sequence length="93" mass="10629">MARSLKKGPFVADHLLKKIEFLNVKKEKKVITTWSRGSTILPIMIGHTIAVHNGREHLPIFITDQMVGHKLGEFSPTRTFRGHTKSDKKSRRP</sequence>
<reference key="1">
    <citation type="journal article" date="2000" name="Nature">
        <title>Ancestral chloroplast genome in Mesostigma viride reveals an early branch of green plant evolution.</title>
        <authorList>
            <person name="Lemieux C."/>
            <person name="Otis C."/>
            <person name="Turmel M."/>
        </authorList>
    </citation>
    <scope>NUCLEOTIDE SEQUENCE [LARGE SCALE GENOMIC DNA]</scope>
    <source>
        <strain>NIES-296 / KY-14 / CCMP 2046</strain>
    </source>
</reference>
<accession>Q9MUU0</accession>
<organism>
    <name type="scientific">Mesostigma viride</name>
    <name type="common">Green alga</name>
    <dbReference type="NCBI Taxonomy" id="41882"/>
    <lineage>
        <taxon>Eukaryota</taxon>
        <taxon>Viridiplantae</taxon>
        <taxon>Streptophyta</taxon>
        <taxon>Mesostigmatophyceae</taxon>
        <taxon>Mesostigmatales</taxon>
        <taxon>Mesostigmataceae</taxon>
        <taxon>Mesostigma</taxon>
    </lineage>
</organism>